<dbReference type="EC" id="3.6.1.-" evidence="1"/>
<dbReference type="EMBL" id="AB006706">
    <property type="protein sequence ID" value="BAB09572.1"/>
    <property type="molecule type" value="Genomic_DNA"/>
</dbReference>
<dbReference type="EMBL" id="CP002688">
    <property type="protein sequence ID" value="AED92461.1"/>
    <property type="molecule type" value="Genomic_DNA"/>
</dbReference>
<dbReference type="RefSeq" id="NP_197275.1">
    <property type="nucleotide sequence ID" value="NM_121779.1"/>
</dbReference>
<dbReference type="SMR" id="Q9FN78"/>
<dbReference type="FunCoup" id="Q9FN78">
    <property type="interactions" value="1338"/>
</dbReference>
<dbReference type="STRING" id="3702.Q9FN78"/>
<dbReference type="PaxDb" id="3702-AT5G17730.1"/>
<dbReference type="EnsemblPlants" id="AT5G17730.1">
    <property type="protein sequence ID" value="AT5G17730.1"/>
    <property type="gene ID" value="AT5G17730"/>
</dbReference>
<dbReference type="GeneID" id="831641"/>
<dbReference type="Gramene" id="AT5G17730.1">
    <property type="protein sequence ID" value="AT5G17730.1"/>
    <property type="gene ID" value="AT5G17730"/>
</dbReference>
<dbReference type="KEGG" id="ath:AT5G17730"/>
<dbReference type="Araport" id="AT5G17730"/>
<dbReference type="TAIR" id="AT5G17730"/>
<dbReference type="eggNOG" id="KOG0743">
    <property type="taxonomic scope" value="Eukaryota"/>
</dbReference>
<dbReference type="HOGENOM" id="CLU_010189_0_1_1"/>
<dbReference type="InParanoid" id="Q9FN78"/>
<dbReference type="OMA" id="PERKYIE"/>
<dbReference type="PhylomeDB" id="Q9FN78"/>
<dbReference type="PRO" id="PR:Q9FN78"/>
<dbReference type="Proteomes" id="UP000006548">
    <property type="component" value="Chromosome 5"/>
</dbReference>
<dbReference type="ExpressionAtlas" id="Q9FN78">
    <property type="expression patterns" value="baseline and differential"/>
</dbReference>
<dbReference type="GO" id="GO:0005524">
    <property type="term" value="F:ATP binding"/>
    <property type="evidence" value="ECO:0007669"/>
    <property type="project" value="UniProtKB-KW"/>
</dbReference>
<dbReference type="GO" id="GO:0016887">
    <property type="term" value="F:ATP hydrolysis activity"/>
    <property type="evidence" value="ECO:0007669"/>
    <property type="project" value="InterPro"/>
</dbReference>
<dbReference type="GO" id="GO:0006950">
    <property type="term" value="P:response to stress"/>
    <property type="evidence" value="ECO:0007669"/>
    <property type="project" value="UniProtKB-ARBA"/>
</dbReference>
<dbReference type="CDD" id="cd19510">
    <property type="entry name" value="RecA-like_BCS1"/>
    <property type="match status" value="1"/>
</dbReference>
<dbReference type="Gene3D" id="6.10.280.40">
    <property type="match status" value="1"/>
</dbReference>
<dbReference type="Gene3D" id="3.40.50.300">
    <property type="entry name" value="P-loop containing nucleotide triphosphate hydrolases"/>
    <property type="match status" value="1"/>
</dbReference>
<dbReference type="InterPro" id="IPR003593">
    <property type="entry name" value="AAA+_ATPase"/>
</dbReference>
<dbReference type="InterPro" id="IPR025753">
    <property type="entry name" value="AAA_N_dom"/>
</dbReference>
<dbReference type="InterPro" id="IPR003959">
    <property type="entry name" value="ATPase_AAA_core"/>
</dbReference>
<dbReference type="InterPro" id="IPR050747">
    <property type="entry name" value="Mitochondrial_chaperone_BCS1"/>
</dbReference>
<dbReference type="InterPro" id="IPR027417">
    <property type="entry name" value="P-loop_NTPase"/>
</dbReference>
<dbReference type="PANTHER" id="PTHR23070">
    <property type="entry name" value="BCS1 AAA-TYPE ATPASE"/>
    <property type="match status" value="1"/>
</dbReference>
<dbReference type="Pfam" id="PF00004">
    <property type="entry name" value="AAA"/>
    <property type="match status" value="1"/>
</dbReference>
<dbReference type="Pfam" id="PF14363">
    <property type="entry name" value="AAA_assoc"/>
    <property type="match status" value="1"/>
</dbReference>
<dbReference type="SMART" id="SM00382">
    <property type="entry name" value="AAA"/>
    <property type="match status" value="1"/>
</dbReference>
<dbReference type="SUPFAM" id="SSF52540">
    <property type="entry name" value="P-loop containing nucleoside triphosphate hydrolases"/>
    <property type="match status" value="1"/>
</dbReference>
<organism evidence="6">
    <name type="scientific">Arabidopsis thaliana</name>
    <name type="common">Mouse-ear cress</name>
    <dbReference type="NCBI Taxonomy" id="3702"/>
    <lineage>
        <taxon>Eukaryota</taxon>
        <taxon>Viridiplantae</taxon>
        <taxon>Streptophyta</taxon>
        <taxon>Embryophyta</taxon>
        <taxon>Tracheophyta</taxon>
        <taxon>Spermatophyta</taxon>
        <taxon>Magnoliopsida</taxon>
        <taxon>eudicotyledons</taxon>
        <taxon>Gunneridae</taxon>
        <taxon>Pentapetalae</taxon>
        <taxon>rosids</taxon>
        <taxon>malvids</taxon>
        <taxon>Brassicales</taxon>
        <taxon>Brassicaceae</taxon>
        <taxon>Camelineae</taxon>
        <taxon>Arabidopsis</taxon>
    </lineage>
</organism>
<protein>
    <recommendedName>
        <fullName>AAA-ATPase At5g17730</fullName>
        <ecNumber evidence="1">3.6.1.-</ecNumber>
    </recommendedName>
</protein>
<name>AATPF_ARATH</name>
<sequence>MFSLRNLPSLAPFVSAYASLTGYVMMIKPFLEMTIPPPLQNYMISYLNSFLHSTPSTLTLIIDDHIKNGMYNELYGAAQVYISTKVNHNAERLRISRDRSEKNVNIHFSVGEVVSDIYQGIEVKWRFCVDSNKSNMVHYFGEHFKLNPDRECVELSFEKKHTELVLNSYIPYVESKAKVINNERKILKMYSYCCMYLKWQSVNLEHPSTFDTMAMNEELKRSVMGDLDRFIRRKDFYKRVGKPWKRGYLLYGPPGTGKTSLVAAIANYLKFDIYDLQLASVREDADLRRLLLGTTNSSILLVEDIDCAVDLHTRLQPKTQDDTKGSSMLTLSGLLTCIDGLWSSCGDERIVIFTTTHKERLDPALLRPGRMDMHIHMGHCCFDVFKTLASNYLGLSHDDPHHLYPEIERLIKGEVLTPAQVAEELMKNEDPDVALEGLVKVLKRKRLELEKYDGETGRGGLRKPELQFFL</sequence>
<reference key="1">
    <citation type="journal article" date="1997" name="DNA Res.">
        <title>Structural analysis of Arabidopsis thaliana chromosome 5. II. Sequence features of the regions of 1,044,062 bp covered by thirteen physically assigned P1 clones.</title>
        <authorList>
            <person name="Kotani H."/>
            <person name="Nakamura Y."/>
            <person name="Sato S."/>
            <person name="Kaneko T."/>
            <person name="Asamizu E."/>
            <person name="Miyajima N."/>
            <person name="Tabata S."/>
        </authorList>
    </citation>
    <scope>NUCLEOTIDE SEQUENCE [LARGE SCALE GENOMIC DNA]</scope>
    <source>
        <strain>cv. Columbia</strain>
    </source>
</reference>
<reference key="2">
    <citation type="journal article" date="2017" name="Plant J.">
        <title>Araport11: a complete reannotation of the Arabidopsis thaliana reference genome.</title>
        <authorList>
            <person name="Cheng C.Y."/>
            <person name="Krishnakumar V."/>
            <person name="Chan A.P."/>
            <person name="Thibaud-Nissen F."/>
            <person name="Schobel S."/>
            <person name="Town C.D."/>
        </authorList>
    </citation>
    <scope>GENOME REANNOTATION</scope>
    <source>
        <strain>cv. Columbia</strain>
    </source>
</reference>
<comment type="catalytic activity">
    <reaction evidence="1">
        <text>ATP + H2O = ADP + phosphate + H(+)</text>
        <dbReference type="Rhea" id="RHEA:13065"/>
        <dbReference type="ChEBI" id="CHEBI:15377"/>
        <dbReference type="ChEBI" id="CHEBI:15378"/>
        <dbReference type="ChEBI" id="CHEBI:30616"/>
        <dbReference type="ChEBI" id="CHEBI:43474"/>
        <dbReference type="ChEBI" id="CHEBI:456216"/>
    </reaction>
</comment>
<comment type="cofactor">
    <cofactor evidence="1">
        <name>Mg(2+)</name>
        <dbReference type="ChEBI" id="CHEBI:18420"/>
    </cofactor>
</comment>
<comment type="similarity">
    <text evidence="3">Belongs to the AAA ATPase family. BCS1 subfamily.</text>
</comment>
<evidence type="ECO:0000250" key="1">
    <source>
        <dbReference type="UniProtKB" id="Q9FLD5"/>
    </source>
</evidence>
<evidence type="ECO:0000255" key="2"/>
<evidence type="ECO:0000305" key="3"/>
<evidence type="ECO:0000312" key="4">
    <source>
        <dbReference type="EMBL" id="AED92461.1"/>
    </source>
</evidence>
<evidence type="ECO:0000312" key="5">
    <source>
        <dbReference type="EMBL" id="BAB09572.1"/>
    </source>
</evidence>
<evidence type="ECO:0000312" key="6">
    <source>
        <dbReference type="Proteomes" id="UP000006548"/>
    </source>
</evidence>
<accession>Q9FN78</accession>
<proteinExistence type="inferred from homology"/>
<feature type="signal peptide" evidence="2">
    <location>
        <begin position="1"/>
        <end position="18"/>
    </location>
</feature>
<feature type="chain" id="PRO_0000434717" description="AAA-ATPase At5g17730" evidence="2">
    <location>
        <begin position="19"/>
        <end position="470"/>
    </location>
</feature>
<feature type="binding site" evidence="2">
    <location>
        <begin position="252"/>
        <end position="259"/>
    </location>
    <ligand>
        <name>ATP</name>
        <dbReference type="ChEBI" id="CHEBI:30616"/>
    </ligand>
</feature>
<keyword id="KW-0067">ATP-binding</keyword>
<keyword id="KW-0378">Hydrolase</keyword>
<keyword id="KW-0460">Magnesium</keyword>
<keyword id="KW-0547">Nucleotide-binding</keyword>
<keyword id="KW-1185">Reference proteome</keyword>
<keyword id="KW-0732">Signal</keyword>
<gene>
    <name evidence="4" type="ordered locus">At5g17730</name>
    <name evidence="5" type="ORF">MVA3.9</name>
</gene>